<evidence type="ECO:0000250" key="1">
    <source>
        <dbReference type="UniProtKB" id="Q9Y6C2"/>
    </source>
</evidence>
<evidence type="ECO:0000255" key="2"/>
<evidence type="ECO:0000255" key="3">
    <source>
        <dbReference type="PROSITE-ProRule" id="PRU00368"/>
    </source>
</evidence>
<evidence type="ECO:0000255" key="4">
    <source>
        <dbReference type="PROSITE-ProRule" id="PRU00384"/>
    </source>
</evidence>
<evidence type="ECO:0000256" key="5">
    <source>
        <dbReference type="SAM" id="MobiDB-lite"/>
    </source>
</evidence>
<evidence type="ECO:0000269" key="6">
    <source>
    </source>
</evidence>
<evidence type="ECO:0000305" key="7"/>
<evidence type="ECO:0000312" key="8">
    <source>
        <dbReference type="ZFIN" id="ZDB-GENE-041001-191"/>
    </source>
</evidence>
<organism>
    <name type="scientific">Danio rerio</name>
    <name type="common">Zebrafish</name>
    <name type="synonym">Brachydanio rerio</name>
    <dbReference type="NCBI Taxonomy" id="7955"/>
    <lineage>
        <taxon>Eukaryota</taxon>
        <taxon>Metazoa</taxon>
        <taxon>Chordata</taxon>
        <taxon>Craniata</taxon>
        <taxon>Vertebrata</taxon>
        <taxon>Euteleostomi</taxon>
        <taxon>Actinopterygii</taxon>
        <taxon>Neopterygii</taxon>
        <taxon>Teleostei</taxon>
        <taxon>Ostariophysi</taxon>
        <taxon>Cypriniformes</taxon>
        <taxon>Danionidae</taxon>
        <taxon>Danioninae</taxon>
        <taxon>Danio</taxon>
    </lineage>
</organism>
<feature type="signal peptide" evidence="2">
    <location>
        <begin position="1"/>
        <end position="27"/>
    </location>
</feature>
<feature type="chain" id="PRO_5003272571" description="EMILIN-1-A" evidence="2">
    <location>
        <begin position="28"/>
        <end position="1014"/>
    </location>
</feature>
<feature type="domain" description="EMI" evidence="4">
    <location>
        <begin position="53"/>
        <end position="128"/>
    </location>
</feature>
<feature type="domain" description="Collagen-like" evidence="2">
    <location>
        <begin position="815"/>
        <end position="865"/>
    </location>
</feature>
<feature type="domain" description="C1q" evidence="3">
    <location>
        <begin position="866"/>
        <end position="1012"/>
    </location>
</feature>
<feature type="region of interest" description="Disordered" evidence="5">
    <location>
        <begin position="125"/>
        <end position="150"/>
    </location>
</feature>
<feature type="region of interest" description="Disordered" evidence="5">
    <location>
        <begin position="811"/>
        <end position="869"/>
    </location>
</feature>
<feature type="coiled-coil region" evidence="2">
    <location>
        <begin position="145"/>
        <end position="179"/>
    </location>
</feature>
<feature type="compositionally biased region" description="Basic and acidic residues" evidence="5">
    <location>
        <begin position="134"/>
        <end position="150"/>
    </location>
</feature>
<feature type="compositionally biased region" description="Low complexity" evidence="5">
    <location>
        <begin position="840"/>
        <end position="856"/>
    </location>
</feature>
<feature type="disulfide bond" evidence="4">
    <location>
        <begin position="57"/>
        <end position="118"/>
    </location>
</feature>
<feature type="disulfide bond" evidence="4">
    <location>
        <begin position="84"/>
        <end position="89"/>
    </location>
</feature>
<feature type="disulfide bond" evidence="4">
    <location>
        <begin position="117"/>
        <end position="126"/>
    </location>
</feature>
<sequence>MALYFVYLSTLLALILLGDNWAAGTYASRYTQHVDENQSGAAAQSGSKVTSRHRNWCAYVVTRTVSCVMEDGVETYVKPEYQRCAWGQCSHVVLYRTYRKPRYKVAYKVVSEMEWKCCHGYSGDDCSDGSSAIHDSRARPTGEEGRSDSDRIRQLEEQIQSLNKNLHNLQKKIYEESQREGISGGNNLADAAQPGMKETIHSIQTKLDMLDNMTRVHDKTLTNINNHLVGGNGIENELDSRYGTLKEEILRELERRVTLSCSSCQTGVESIQRQHQEDRERIRELEKHISVMEQHHQQTLDLLSRSQSCCDSLDRKLSAIDRKVSSTAETYDILRGRLEKELRSNGNGGRGKAMEEKLNNRLRDLERRLNGTVRKTEQKCSHTETSMKEFVQREIGQIKNSVLGRNDDHGYRISTVEIDIQDLKRFINDHKNNLERLGNKTNDLDSGLKSAIHLCTETCAAKGSETEDTVKSLEWKVVANEEDIKKFDTKLKDISVSGDSLLDRVIDLSNDVQKIKDLTGQNGEHFNQIVTDVENLGRDCDVCSSIDGELQKIRNVTSYAFDKFQAELTVLGRKVFSDEHVCSQVCSNLQEEVGKLKEEVEKCTGQCMISMADHQRNVDNQNTVTRKLGKDLKSIQGELTGILQIFNSINDTLKGLRNTIQKHGNNITDLNTSKGKIYLELDQLYDDLNKHKVDSKGHFDSISSFNSNLMTEMGECRLSREGLDKRLSKMEDVCGRLDTLSENLKTIKDGLSKHVSGLWTCVNDLNSTVISHSETISRIHNVHLENIQGRMNNLNSSIRNVLKEFQIFTEQDFTGPPGLPGPQGEKGSKGPPGPRGPLGKEGPQGRVGPVGPPGLRGEQGPPGKDANVPRLSFSAALTRPQASSGTIIFNKVFINERKAYNPKTGVFTAPVRGRYFFSAVLTGHKNVKIEAVLSKSNFGIARGDSAGYQPEGLEKPMAEARHTPGSLVIFNIVLPLQEGDTICIDLVTGKLAHSVEPLTIFSGMLLYEESEDRL</sequence>
<name>EMI1A_DANRE</name>
<gene>
    <name evidence="8" type="primary">emilin1a</name>
    <name evidence="8" type="ORF">im:7159005</name>
    <name evidence="8" type="ORF">si:dkey-20n10.2</name>
</gene>
<proteinExistence type="inferred from homology"/>
<dbReference type="EMBL" id="BX465184">
    <property type="status" value="NOT_ANNOTATED_CDS"/>
    <property type="molecule type" value="Genomic_DNA"/>
</dbReference>
<dbReference type="RefSeq" id="XP_005160813.1">
    <property type="nucleotide sequence ID" value="XM_005160756.4"/>
</dbReference>
<dbReference type="SMR" id="F1QC17"/>
<dbReference type="FunCoup" id="F1QC17">
    <property type="interactions" value="1257"/>
</dbReference>
<dbReference type="STRING" id="7955.ENSDARP00000106093"/>
<dbReference type="PaxDb" id="7955-ENSDARP00000106093"/>
<dbReference type="Ensembl" id="ENSDART00000128895">
    <property type="protein sequence ID" value="ENSDARP00000106093"/>
    <property type="gene ID" value="ENSDARG00000024537"/>
</dbReference>
<dbReference type="GeneID" id="566473"/>
<dbReference type="AGR" id="ZFIN:ZDB-GENE-041001-191"/>
<dbReference type="CTD" id="566473"/>
<dbReference type="ZFIN" id="ZDB-GENE-041001-191">
    <property type="gene designation" value="emilin1a"/>
</dbReference>
<dbReference type="eggNOG" id="KOG3544">
    <property type="taxonomic scope" value="Eukaryota"/>
</dbReference>
<dbReference type="HOGENOM" id="CLU_319805_0_0_1"/>
<dbReference type="InParanoid" id="F1QC17"/>
<dbReference type="OMA" id="TCGHNGK"/>
<dbReference type="OrthoDB" id="9944757at2759"/>
<dbReference type="PhylomeDB" id="F1QC17"/>
<dbReference type="PRO" id="PR:F1QC17"/>
<dbReference type="Proteomes" id="UP000000437">
    <property type="component" value="Chromosome 20"/>
</dbReference>
<dbReference type="Bgee" id="ENSDARG00000024537">
    <property type="expression patterns" value="Expressed in head mesenchyme and 36 other cell types or tissues"/>
</dbReference>
<dbReference type="ExpressionAtlas" id="F1QC17">
    <property type="expression patterns" value="baseline"/>
</dbReference>
<dbReference type="GO" id="GO:0005576">
    <property type="term" value="C:extracellular region"/>
    <property type="evidence" value="ECO:0007669"/>
    <property type="project" value="UniProtKB-KW"/>
</dbReference>
<dbReference type="GO" id="GO:0140060">
    <property type="term" value="P:axon arborization"/>
    <property type="evidence" value="ECO:0000315"/>
    <property type="project" value="ZFIN"/>
</dbReference>
<dbReference type="GO" id="GO:0030097">
    <property type="term" value="P:hemopoiesis"/>
    <property type="evidence" value="ECO:0000315"/>
    <property type="project" value="ZFIN"/>
</dbReference>
<dbReference type="FunFam" id="2.60.120.40:FF:000010">
    <property type="entry name" value="EMILIN-1 protein"/>
    <property type="match status" value="1"/>
</dbReference>
<dbReference type="Gene3D" id="2.60.120.40">
    <property type="match status" value="1"/>
</dbReference>
<dbReference type="InterPro" id="IPR001073">
    <property type="entry name" value="C1q_dom"/>
</dbReference>
<dbReference type="InterPro" id="IPR008160">
    <property type="entry name" value="Collagen"/>
</dbReference>
<dbReference type="InterPro" id="IPR050392">
    <property type="entry name" value="Collagen/C1q_domain"/>
</dbReference>
<dbReference type="InterPro" id="IPR011489">
    <property type="entry name" value="EMI_domain"/>
</dbReference>
<dbReference type="InterPro" id="IPR008983">
    <property type="entry name" value="Tumour_necrosis_fac-like_dom"/>
</dbReference>
<dbReference type="PANTHER" id="PTHR15427">
    <property type="entry name" value="EMILIN ELASTIN MICROFIBRIL INTERFACE-LOCATED PROTEIN ELASTIN MICROFIBRIL INTERFACER"/>
    <property type="match status" value="1"/>
</dbReference>
<dbReference type="PANTHER" id="PTHR15427:SF1">
    <property type="entry name" value="EMILIN-1"/>
    <property type="match status" value="1"/>
</dbReference>
<dbReference type="Pfam" id="PF00386">
    <property type="entry name" value="C1q"/>
    <property type="match status" value="1"/>
</dbReference>
<dbReference type="Pfam" id="PF01391">
    <property type="entry name" value="Collagen"/>
    <property type="match status" value="1"/>
</dbReference>
<dbReference type="Pfam" id="PF07546">
    <property type="entry name" value="EMI"/>
    <property type="match status" value="1"/>
</dbReference>
<dbReference type="SMART" id="SM00110">
    <property type="entry name" value="C1Q"/>
    <property type="match status" value="1"/>
</dbReference>
<dbReference type="SUPFAM" id="SSF49842">
    <property type="entry name" value="TNF-like"/>
    <property type="match status" value="1"/>
</dbReference>
<dbReference type="PROSITE" id="PS50871">
    <property type="entry name" value="C1Q"/>
    <property type="match status" value="1"/>
</dbReference>
<dbReference type="PROSITE" id="PS51041">
    <property type="entry name" value="EMI"/>
    <property type="match status" value="1"/>
</dbReference>
<protein>
    <recommendedName>
        <fullName evidence="7">EMILIN-1-A</fullName>
    </recommendedName>
    <alternativeName>
        <fullName evidence="8">Elastin microfibril interfacer 1a</fullName>
    </alternativeName>
</protein>
<keyword id="KW-0175">Coiled coil</keyword>
<keyword id="KW-1015">Disulfide bond</keyword>
<keyword id="KW-0272">Extracellular matrix</keyword>
<keyword id="KW-1185">Reference proteome</keyword>
<keyword id="KW-0964">Secreted</keyword>
<keyword id="KW-0732">Signal</keyword>
<reference key="1">
    <citation type="journal article" date="2013" name="Nature">
        <title>The zebrafish reference genome sequence and its relationship to the human genome.</title>
        <authorList>
            <person name="Howe K."/>
            <person name="Clark M.D."/>
            <person name="Torroja C.F."/>
            <person name="Torrance J."/>
            <person name="Berthelot C."/>
            <person name="Muffato M."/>
            <person name="Collins J.E."/>
            <person name="Humphray S."/>
            <person name="McLaren K."/>
            <person name="Matthews L."/>
            <person name="McLaren S."/>
            <person name="Sealy I."/>
            <person name="Caccamo M."/>
            <person name="Churcher C."/>
            <person name="Scott C."/>
            <person name="Barrett J.C."/>
            <person name="Koch R."/>
            <person name="Rauch G.J."/>
            <person name="White S."/>
            <person name="Chow W."/>
            <person name="Kilian B."/>
            <person name="Quintais L.T."/>
            <person name="Guerra-Assuncao J.A."/>
            <person name="Zhou Y."/>
            <person name="Gu Y."/>
            <person name="Yen J."/>
            <person name="Vogel J.H."/>
            <person name="Eyre T."/>
            <person name="Redmond S."/>
            <person name="Banerjee R."/>
            <person name="Chi J."/>
            <person name="Fu B."/>
            <person name="Langley E."/>
            <person name="Maguire S.F."/>
            <person name="Laird G.K."/>
            <person name="Lloyd D."/>
            <person name="Kenyon E."/>
            <person name="Donaldson S."/>
            <person name="Sehra H."/>
            <person name="Almeida-King J."/>
            <person name="Loveland J."/>
            <person name="Trevanion S."/>
            <person name="Jones M."/>
            <person name="Quail M."/>
            <person name="Willey D."/>
            <person name="Hunt A."/>
            <person name="Burton J."/>
            <person name="Sims S."/>
            <person name="McLay K."/>
            <person name="Plumb B."/>
            <person name="Davis J."/>
            <person name="Clee C."/>
            <person name="Oliver K."/>
            <person name="Clark R."/>
            <person name="Riddle C."/>
            <person name="Elliot D."/>
            <person name="Threadgold G."/>
            <person name="Harden G."/>
            <person name="Ware D."/>
            <person name="Begum S."/>
            <person name="Mortimore B."/>
            <person name="Kerry G."/>
            <person name="Heath P."/>
            <person name="Phillimore B."/>
            <person name="Tracey A."/>
            <person name="Corby N."/>
            <person name="Dunn M."/>
            <person name="Johnson C."/>
            <person name="Wood J."/>
            <person name="Clark S."/>
            <person name="Pelan S."/>
            <person name="Griffiths G."/>
            <person name="Smith M."/>
            <person name="Glithero R."/>
            <person name="Howden P."/>
            <person name="Barker N."/>
            <person name="Lloyd C."/>
            <person name="Stevens C."/>
            <person name="Harley J."/>
            <person name="Holt K."/>
            <person name="Panagiotidis G."/>
            <person name="Lovell J."/>
            <person name="Beasley H."/>
            <person name="Henderson C."/>
            <person name="Gordon D."/>
            <person name="Auger K."/>
            <person name="Wright D."/>
            <person name="Collins J."/>
            <person name="Raisen C."/>
            <person name="Dyer L."/>
            <person name="Leung K."/>
            <person name="Robertson L."/>
            <person name="Ambridge K."/>
            <person name="Leongamornlert D."/>
            <person name="McGuire S."/>
            <person name="Gilderthorp R."/>
            <person name="Griffiths C."/>
            <person name="Manthravadi D."/>
            <person name="Nichol S."/>
            <person name="Barker G."/>
            <person name="Whitehead S."/>
            <person name="Kay M."/>
            <person name="Brown J."/>
            <person name="Murnane C."/>
            <person name="Gray E."/>
            <person name="Humphries M."/>
            <person name="Sycamore N."/>
            <person name="Barker D."/>
            <person name="Saunders D."/>
            <person name="Wallis J."/>
            <person name="Babbage A."/>
            <person name="Hammond S."/>
            <person name="Mashreghi-Mohammadi M."/>
            <person name="Barr L."/>
            <person name="Martin S."/>
            <person name="Wray P."/>
            <person name="Ellington A."/>
            <person name="Matthews N."/>
            <person name="Ellwood M."/>
            <person name="Woodmansey R."/>
            <person name="Clark G."/>
            <person name="Cooper J."/>
            <person name="Tromans A."/>
            <person name="Grafham D."/>
            <person name="Skuce C."/>
            <person name="Pandian R."/>
            <person name="Andrews R."/>
            <person name="Harrison E."/>
            <person name="Kimberley A."/>
            <person name="Garnett J."/>
            <person name="Fosker N."/>
            <person name="Hall R."/>
            <person name="Garner P."/>
            <person name="Kelly D."/>
            <person name="Bird C."/>
            <person name="Palmer S."/>
            <person name="Gehring I."/>
            <person name="Berger A."/>
            <person name="Dooley C.M."/>
            <person name="Ersan-Urun Z."/>
            <person name="Eser C."/>
            <person name="Geiger H."/>
            <person name="Geisler M."/>
            <person name="Karotki L."/>
            <person name="Kirn A."/>
            <person name="Konantz J."/>
            <person name="Konantz M."/>
            <person name="Oberlander M."/>
            <person name="Rudolph-Geiger S."/>
            <person name="Teucke M."/>
            <person name="Lanz C."/>
            <person name="Raddatz G."/>
            <person name="Osoegawa K."/>
            <person name="Zhu B."/>
            <person name="Rapp A."/>
            <person name="Widaa S."/>
            <person name="Langford C."/>
            <person name="Yang F."/>
            <person name="Schuster S.C."/>
            <person name="Carter N.P."/>
            <person name="Harrow J."/>
            <person name="Ning Z."/>
            <person name="Herrero J."/>
            <person name="Searle S.M."/>
            <person name="Enright A."/>
            <person name="Geisler R."/>
            <person name="Plasterk R.H."/>
            <person name="Lee C."/>
            <person name="Westerfield M."/>
            <person name="de Jong P.J."/>
            <person name="Zon L.I."/>
            <person name="Postlethwait J.H."/>
            <person name="Nusslein-Volhard C."/>
            <person name="Hubbard T.J."/>
            <person name="Roest Crollius H."/>
            <person name="Rogers J."/>
            <person name="Stemple D.L."/>
        </authorList>
    </citation>
    <scope>NUCLEOTIDE SEQUENCE [LARGE SCALE GENOMIC DNA]</scope>
    <source>
        <strain>Tuebingen</strain>
    </source>
</reference>
<reference key="2">
    <citation type="journal article" date="2020" name="Neurobiol. Dis.">
        <title>Distal motor neuropathy associated with novel EMILIN1 mutation.</title>
        <authorList>
            <person name="Iacomino M."/>
            <person name="Doliana R."/>
            <person name="Marchese M."/>
            <person name="Capuano A."/>
            <person name="Striano P."/>
            <person name="Spessotto P."/>
            <person name="Bosisio G."/>
            <person name="Iodice R."/>
            <person name="Manganelli F."/>
            <person name="Lanteri P."/>
            <person name="Orsini A."/>
            <person name="Baldassari S."/>
            <person name="Baratto S."/>
            <person name="Fruscione F."/>
            <person name="Prada V."/>
            <person name="Broda P."/>
            <person name="Tessa A."/>
            <person name="Bertocci G."/>
            <person name="Schenone A."/>
            <person name="Colombatti A."/>
            <person name="Minetti C."/>
            <person name="Santorelli F.M."/>
            <person name="Zara F."/>
            <person name="Fiorillo C."/>
        </authorList>
    </citation>
    <scope>DISRUPTION PHENOTYPE</scope>
</reference>
<accession>F1QC17</accession>
<accession>A0A8M2B7W4</accession>
<comment type="function">
    <text evidence="1">May be responsible for anchoring smooth muscle cells to elastic fibers, and may be involved not only in the formation of the elastic fiber, but also in the processes that regulate vessel assembly. Has cell adhesive capacity.</text>
</comment>
<comment type="subcellular location">
    <subcellularLocation>
        <location evidence="1">Secreted</location>
        <location evidence="1">Extracellular space</location>
        <location evidence="1">Extracellular matrix</location>
    </subcellularLocation>
</comment>
<comment type="disruption phenotype">
    <text evidence="6">Morphants at 48 hpf display body curvature defects, impaired brain development, and motor neuron defects with abnormal development of axons and decreased arborization. Morphant embryos and larvae have decreased locomotor activity compared to wild-type.</text>
</comment>